<protein>
    <recommendedName>
        <fullName evidence="1">Ribonuclease 3</fullName>
        <ecNumber evidence="1">3.1.26.3</ecNumber>
    </recommendedName>
    <alternativeName>
        <fullName evidence="1">Ribonuclease III</fullName>
        <shortName evidence="1">RNase III</shortName>
    </alternativeName>
</protein>
<evidence type="ECO:0000255" key="1">
    <source>
        <dbReference type="HAMAP-Rule" id="MF_00104"/>
    </source>
</evidence>
<accession>B8D7F5</accession>
<feature type="chain" id="PRO_1000194415" description="Ribonuclease 3">
    <location>
        <begin position="1"/>
        <end position="226"/>
    </location>
</feature>
<feature type="domain" description="RNase III" evidence="1">
    <location>
        <begin position="6"/>
        <end position="128"/>
    </location>
</feature>
<feature type="domain" description="DRBM" evidence="1">
    <location>
        <begin position="155"/>
        <end position="225"/>
    </location>
</feature>
<feature type="active site" evidence="1">
    <location>
        <position position="45"/>
    </location>
</feature>
<feature type="active site" evidence="1">
    <location>
        <position position="117"/>
    </location>
</feature>
<feature type="binding site" evidence="1">
    <location>
        <position position="41"/>
    </location>
    <ligand>
        <name>Mg(2+)</name>
        <dbReference type="ChEBI" id="CHEBI:18420"/>
    </ligand>
</feature>
<feature type="binding site" evidence="1">
    <location>
        <position position="114"/>
    </location>
    <ligand>
        <name>Mg(2+)</name>
        <dbReference type="ChEBI" id="CHEBI:18420"/>
    </ligand>
</feature>
<feature type="binding site" evidence="1">
    <location>
        <position position="117"/>
    </location>
    <ligand>
        <name>Mg(2+)</name>
        <dbReference type="ChEBI" id="CHEBI:18420"/>
    </ligand>
</feature>
<name>RNC_BUCAT</name>
<comment type="function">
    <text evidence="1">Digests double-stranded RNA. Involved in the processing of primary rRNA transcript to yield the immediate precursors to the large and small rRNAs (23S and 16S). Processes some mRNAs, and tRNAs when they are encoded in the rRNA operon. Processes pre-crRNA and tracrRNA of type II CRISPR loci if present in the organism.</text>
</comment>
<comment type="catalytic activity">
    <reaction evidence="1">
        <text>Endonucleolytic cleavage to 5'-phosphomonoester.</text>
        <dbReference type="EC" id="3.1.26.3"/>
    </reaction>
</comment>
<comment type="cofactor">
    <cofactor evidence="1">
        <name>Mg(2+)</name>
        <dbReference type="ChEBI" id="CHEBI:18420"/>
    </cofactor>
</comment>
<comment type="subunit">
    <text evidence="1">Homodimer.</text>
</comment>
<comment type="subcellular location">
    <subcellularLocation>
        <location evidence="1">Cytoplasm</location>
    </subcellularLocation>
</comment>
<comment type="similarity">
    <text evidence="1">Belongs to the ribonuclease III family.</text>
</comment>
<reference key="1">
    <citation type="journal article" date="2009" name="Science">
        <title>The dynamics and time scale of ongoing genomic erosion in symbiotic bacteria.</title>
        <authorList>
            <person name="Moran N.A."/>
            <person name="McLaughlin H.J."/>
            <person name="Sorek R."/>
        </authorList>
    </citation>
    <scope>NUCLEOTIDE SEQUENCE [LARGE SCALE GENOMIC DNA]</scope>
    <source>
        <strain>Tuc7</strain>
    </source>
</reference>
<organism>
    <name type="scientific">Buchnera aphidicola subsp. Acyrthosiphon pisum (strain Tuc7)</name>
    <dbReference type="NCBI Taxonomy" id="561501"/>
    <lineage>
        <taxon>Bacteria</taxon>
        <taxon>Pseudomonadati</taxon>
        <taxon>Pseudomonadota</taxon>
        <taxon>Gammaproteobacteria</taxon>
        <taxon>Enterobacterales</taxon>
        <taxon>Erwiniaceae</taxon>
        <taxon>Buchnera</taxon>
    </lineage>
</organism>
<dbReference type="EC" id="3.1.26.3" evidence="1"/>
<dbReference type="EMBL" id="CP001158">
    <property type="protein sequence ID" value="ACL30070.1"/>
    <property type="molecule type" value="Genomic_DNA"/>
</dbReference>
<dbReference type="RefSeq" id="WP_009874212.1">
    <property type="nucleotide sequence ID" value="NC_011834.1"/>
</dbReference>
<dbReference type="SMR" id="B8D7F5"/>
<dbReference type="KEGG" id="bau:BUAPTUC7_255"/>
<dbReference type="HOGENOM" id="CLU_000907_1_1_6"/>
<dbReference type="GO" id="GO:0005737">
    <property type="term" value="C:cytoplasm"/>
    <property type="evidence" value="ECO:0007669"/>
    <property type="project" value="UniProtKB-SubCell"/>
</dbReference>
<dbReference type="GO" id="GO:0003725">
    <property type="term" value="F:double-stranded RNA binding"/>
    <property type="evidence" value="ECO:0007669"/>
    <property type="project" value="TreeGrafter"/>
</dbReference>
<dbReference type="GO" id="GO:0046872">
    <property type="term" value="F:metal ion binding"/>
    <property type="evidence" value="ECO:0007669"/>
    <property type="project" value="UniProtKB-KW"/>
</dbReference>
<dbReference type="GO" id="GO:0004525">
    <property type="term" value="F:ribonuclease III activity"/>
    <property type="evidence" value="ECO:0007669"/>
    <property type="project" value="UniProtKB-UniRule"/>
</dbReference>
<dbReference type="GO" id="GO:0019843">
    <property type="term" value="F:rRNA binding"/>
    <property type="evidence" value="ECO:0007669"/>
    <property type="project" value="UniProtKB-KW"/>
</dbReference>
<dbReference type="GO" id="GO:0006397">
    <property type="term" value="P:mRNA processing"/>
    <property type="evidence" value="ECO:0007669"/>
    <property type="project" value="UniProtKB-UniRule"/>
</dbReference>
<dbReference type="GO" id="GO:0010468">
    <property type="term" value="P:regulation of gene expression"/>
    <property type="evidence" value="ECO:0007669"/>
    <property type="project" value="TreeGrafter"/>
</dbReference>
<dbReference type="GO" id="GO:0006364">
    <property type="term" value="P:rRNA processing"/>
    <property type="evidence" value="ECO:0007669"/>
    <property type="project" value="UniProtKB-UniRule"/>
</dbReference>
<dbReference type="GO" id="GO:0008033">
    <property type="term" value="P:tRNA processing"/>
    <property type="evidence" value="ECO:0007669"/>
    <property type="project" value="UniProtKB-KW"/>
</dbReference>
<dbReference type="CDD" id="cd10845">
    <property type="entry name" value="DSRM_RNAse_III_family"/>
    <property type="match status" value="1"/>
</dbReference>
<dbReference type="CDD" id="cd00593">
    <property type="entry name" value="RIBOc"/>
    <property type="match status" value="1"/>
</dbReference>
<dbReference type="FunFam" id="1.10.1520.10:FF:000001">
    <property type="entry name" value="Ribonuclease 3"/>
    <property type="match status" value="1"/>
</dbReference>
<dbReference type="FunFam" id="3.30.160.20:FF:000003">
    <property type="entry name" value="Ribonuclease 3"/>
    <property type="match status" value="1"/>
</dbReference>
<dbReference type="Gene3D" id="3.30.160.20">
    <property type="match status" value="1"/>
</dbReference>
<dbReference type="Gene3D" id="1.10.1520.10">
    <property type="entry name" value="Ribonuclease III domain"/>
    <property type="match status" value="1"/>
</dbReference>
<dbReference type="HAMAP" id="MF_00104">
    <property type="entry name" value="RNase_III"/>
    <property type="match status" value="1"/>
</dbReference>
<dbReference type="InterPro" id="IPR014720">
    <property type="entry name" value="dsRBD_dom"/>
</dbReference>
<dbReference type="InterPro" id="IPR011907">
    <property type="entry name" value="RNase_III"/>
</dbReference>
<dbReference type="InterPro" id="IPR000999">
    <property type="entry name" value="RNase_III_dom"/>
</dbReference>
<dbReference type="InterPro" id="IPR036389">
    <property type="entry name" value="RNase_III_sf"/>
</dbReference>
<dbReference type="NCBIfam" id="TIGR02191">
    <property type="entry name" value="RNaseIII"/>
    <property type="match status" value="1"/>
</dbReference>
<dbReference type="PANTHER" id="PTHR11207:SF0">
    <property type="entry name" value="RIBONUCLEASE 3"/>
    <property type="match status" value="1"/>
</dbReference>
<dbReference type="PANTHER" id="PTHR11207">
    <property type="entry name" value="RIBONUCLEASE III"/>
    <property type="match status" value="1"/>
</dbReference>
<dbReference type="Pfam" id="PF00035">
    <property type="entry name" value="dsrm"/>
    <property type="match status" value="1"/>
</dbReference>
<dbReference type="Pfam" id="PF14622">
    <property type="entry name" value="Ribonucleas_3_3"/>
    <property type="match status" value="1"/>
</dbReference>
<dbReference type="SMART" id="SM00358">
    <property type="entry name" value="DSRM"/>
    <property type="match status" value="1"/>
</dbReference>
<dbReference type="SMART" id="SM00535">
    <property type="entry name" value="RIBOc"/>
    <property type="match status" value="1"/>
</dbReference>
<dbReference type="SUPFAM" id="SSF54768">
    <property type="entry name" value="dsRNA-binding domain-like"/>
    <property type="match status" value="1"/>
</dbReference>
<dbReference type="SUPFAM" id="SSF69065">
    <property type="entry name" value="RNase III domain-like"/>
    <property type="match status" value="1"/>
</dbReference>
<dbReference type="PROSITE" id="PS50137">
    <property type="entry name" value="DS_RBD"/>
    <property type="match status" value="1"/>
</dbReference>
<dbReference type="PROSITE" id="PS00517">
    <property type="entry name" value="RNASE_3_1"/>
    <property type="match status" value="1"/>
</dbReference>
<dbReference type="PROSITE" id="PS50142">
    <property type="entry name" value="RNASE_3_2"/>
    <property type="match status" value="1"/>
</dbReference>
<gene>
    <name evidence="1" type="primary">rnc</name>
    <name type="ordered locus">BUAPTUC7_255</name>
</gene>
<sequence>MNHIVTKKIQKVLGYTFTHKDLLKQALTHRSASSKHNERLEFLGDSILSFVIANALYQHFPYIDEGDMSRMRATLVRGNTLAEIAYEFDLGEYLKLGQGELKSGGFRRESILANTVEALIGSIYLDSNIKTVEELILKWYEKRLEKISPGDTQKDPKTRLQEYLQSKHLSLPLYFIVEVYGEAHNQLFTIHCKISTISEYLIGTGSSRRKAEQDAAQKALIKLGVE</sequence>
<keyword id="KW-0963">Cytoplasm</keyword>
<keyword id="KW-0255">Endonuclease</keyword>
<keyword id="KW-0378">Hydrolase</keyword>
<keyword id="KW-0460">Magnesium</keyword>
<keyword id="KW-0479">Metal-binding</keyword>
<keyword id="KW-0507">mRNA processing</keyword>
<keyword id="KW-0540">Nuclease</keyword>
<keyword id="KW-0694">RNA-binding</keyword>
<keyword id="KW-0698">rRNA processing</keyword>
<keyword id="KW-0699">rRNA-binding</keyword>
<keyword id="KW-0819">tRNA processing</keyword>
<proteinExistence type="inferred from homology"/>